<dbReference type="GO" id="GO:0005576">
    <property type="term" value="C:extracellular region"/>
    <property type="evidence" value="ECO:0007669"/>
    <property type="project" value="UniProtKB-SubCell"/>
</dbReference>
<dbReference type="GO" id="GO:0005550">
    <property type="term" value="F:pheromone binding"/>
    <property type="evidence" value="ECO:0007669"/>
    <property type="project" value="UniProtKB-KW"/>
</dbReference>
<feature type="chain" id="PRO_0000238927" description="Major urinary protein">
    <location>
        <begin position="1" status="less than"/>
        <end position="46" status="greater than"/>
    </location>
</feature>
<feature type="glycosylation site" description="N-linked (GlcNAc...) asparagine" evidence="3">
    <location>
        <position position="15"/>
    </location>
</feature>
<feature type="non-consecutive residues" evidence="5">
    <location>
        <begin position="9"/>
        <end position="10"/>
    </location>
</feature>
<feature type="non-consecutive residues" evidence="5">
    <location>
        <begin position="19"/>
        <end position="20"/>
    </location>
</feature>
<feature type="non-consecutive residues" evidence="5">
    <location>
        <begin position="30"/>
        <end position="31"/>
    </location>
</feature>
<feature type="non-terminal residue" evidence="5">
    <location>
        <position position="1"/>
    </location>
</feature>
<feature type="non-terminal residue" evidence="5">
    <location>
        <position position="46"/>
    </location>
</feature>
<accession>P84855</accession>
<comment type="function">
    <text evidence="2 4">Binds pheromones that are released from drying urine of males. These pheromones affect the sexual behavior of females (By similarity). Acts as a shuttle for pheromonal communication between individuals of the same species.</text>
</comment>
<comment type="subcellular location">
    <subcellularLocation>
        <location evidence="1">Secreted</location>
    </subcellularLocation>
</comment>
<comment type="tissue specificity">
    <text evidence="4">Found in many tissues including liver, urine, preputial gland, clitoral gland, submandibular gland and salivary gland.</text>
</comment>
<comment type="induction">
    <text evidence="4">Repressed by estrogen.</text>
</comment>
<comment type="similarity">
    <text evidence="6">Belongs to the calycin superfamily. Lipocalin family.</text>
</comment>
<reference evidence="6" key="1">
    <citation type="thesis" date="2007" institute="Bharathidasan University" country="India">
        <title>Identification, purification and characterization of alpha 2u globulin (a pheromone binding protein) in the male house rat, Rattus rattus L.</title>
        <authorList>
            <person name="Rajkumar R."/>
        </authorList>
    </citation>
    <scope>PROTEIN SEQUENCE</scope>
    <scope>FUNCTION</scope>
    <scope>TISSUE SPECIFICITY</scope>
    <scope>INDUCTION</scope>
    <source>
        <tissue evidence="4">Preputial gland</tissue>
        <tissue evidence="4">Urine</tissue>
    </source>
</reference>
<reference evidence="6" key="2">
    <citation type="submission" date="2007-05" db="UniProtKB">
        <authorList>
            <person name="Rajkumar R."/>
            <person name="Archunan G."/>
        </authorList>
    </citation>
    <scope>PROTEIN SEQUENCE</scope>
    <source>
        <tissue>Preputial gland</tissue>
        <tissue>Urine</tissue>
    </source>
</reference>
<evidence type="ECO:0000250" key="1"/>
<evidence type="ECO:0000250" key="2">
    <source>
        <dbReference type="UniProtKB" id="P02761"/>
    </source>
</evidence>
<evidence type="ECO:0000255" key="3"/>
<evidence type="ECO:0000269" key="4">
    <source ref="1"/>
</evidence>
<evidence type="ECO:0000303" key="5">
    <source ref="1"/>
</evidence>
<evidence type="ECO:0000305" key="6"/>
<name>MUP_RATRT</name>
<organism>
    <name type="scientific">Rattus rattus</name>
    <name type="common">Black rat</name>
    <dbReference type="NCBI Taxonomy" id="10117"/>
    <lineage>
        <taxon>Eukaryota</taxon>
        <taxon>Metazoa</taxon>
        <taxon>Chordata</taxon>
        <taxon>Craniata</taxon>
        <taxon>Vertebrata</taxon>
        <taxon>Euteleostomi</taxon>
        <taxon>Mammalia</taxon>
        <taxon>Eutheria</taxon>
        <taxon>Euarchontoglires</taxon>
        <taxon>Glires</taxon>
        <taxon>Rodentia</taxon>
        <taxon>Myomorpha</taxon>
        <taxon>Muroidea</taxon>
        <taxon>Muridae</taxon>
        <taxon>Murinae</taxon>
        <taxon>Rattus</taxon>
    </lineage>
</organism>
<sequence>LCVAHGITREKIEENGSMRENIIDVTKTNRVFMQHIDVLENSLGFK</sequence>
<proteinExistence type="evidence at protein level"/>
<keyword id="KW-0903">Direct protein sequencing</keyword>
<keyword id="KW-0325">Glycoprotein</keyword>
<keyword id="KW-0590">Pheromone-binding</keyword>
<keyword id="KW-0964">Secreted</keyword>
<keyword id="KW-0813">Transport</keyword>
<protein>
    <recommendedName>
        <fullName>Major urinary protein</fullName>
        <shortName>MUP</shortName>
    </recommendedName>
    <alternativeName>
        <fullName>Alpha(2)-euglobulin</fullName>
    </alternativeName>
    <alternativeName>
        <fullName>Alpha-2u-globulin</fullName>
    </alternativeName>
</protein>